<keyword id="KW-0025">Alternative splicing</keyword>
<keyword id="KW-0130">Cell adhesion</keyword>
<keyword id="KW-1003">Cell membrane</keyword>
<keyword id="KW-0966">Cell projection</keyword>
<keyword id="KW-1015">Disulfide bond</keyword>
<keyword id="KW-0325">Glycoprotein</keyword>
<keyword id="KW-0472">Membrane</keyword>
<keyword id="KW-0597">Phosphoprotein</keyword>
<keyword id="KW-0654">Proteoglycan</keyword>
<keyword id="KW-0675">Receptor</keyword>
<keyword id="KW-1185">Reference proteome</keyword>
<keyword id="KW-0964">Secreted</keyword>
<keyword id="KW-0732">Signal</keyword>
<keyword id="KW-0812">Transmembrane</keyword>
<keyword id="KW-1133">Transmembrane helix</keyword>
<proteinExistence type="evidence at transcript level"/>
<dbReference type="EMBL" id="U10880">
    <property type="protein sequence ID" value="AAC13767.1"/>
    <property type="molecule type" value="mRNA"/>
</dbReference>
<dbReference type="EMBL" id="U10881">
    <property type="protein sequence ID" value="AAA19316.1"/>
    <property type="molecule type" value="mRNA"/>
</dbReference>
<dbReference type="RefSeq" id="NP_001268802.1">
    <property type="nucleotide sequence ID" value="NM_001281873.1"/>
</dbReference>
<dbReference type="RefSeq" id="NP_001268803.1">
    <property type="nucleotide sequence ID" value="NM_001281874.1"/>
</dbReference>
<dbReference type="SMR" id="Q60522"/>
<dbReference type="STRING" id="10036.ENSMAUP00000003886"/>
<dbReference type="GlyCosmos" id="Q60522">
    <property type="glycosylation" value="8 sites, No reported glycans"/>
</dbReference>
<dbReference type="Ensembl" id="ENSMAUT00000005642">
    <molecule id="Q60522-1"/>
    <property type="protein sequence ID" value="ENSMAUP00000003886"/>
    <property type="gene ID" value="ENSMAUG00000004546"/>
</dbReference>
<dbReference type="GeneID" id="101826056"/>
<dbReference type="KEGG" id="maua:101826056"/>
<dbReference type="CTD" id="960"/>
<dbReference type="eggNOG" id="ENOG502RX7Q">
    <property type="taxonomic scope" value="Eukaryota"/>
</dbReference>
<dbReference type="OrthoDB" id="9938473at2759"/>
<dbReference type="Proteomes" id="UP000189706">
    <property type="component" value="Unplaced"/>
</dbReference>
<dbReference type="GO" id="GO:0016324">
    <property type="term" value="C:apical plasma membrane"/>
    <property type="evidence" value="ECO:0000250"/>
    <property type="project" value="UniProtKB"/>
</dbReference>
<dbReference type="GO" id="GO:0016323">
    <property type="term" value="C:basolateral plasma membrane"/>
    <property type="evidence" value="ECO:0007669"/>
    <property type="project" value="TreeGrafter"/>
</dbReference>
<dbReference type="GO" id="GO:0042995">
    <property type="term" value="C:cell projection"/>
    <property type="evidence" value="ECO:0000250"/>
    <property type="project" value="UniProtKB"/>
</dbReference>
<dbReference type="GO" id="GO:0005576">
    <property type="term" value="C:extracellular region"/>
    <property type="evidence" value="ECO:0007669"/>
    <property type="project" value="UniProtKB-SubCell"/>
</dbReference>
<dbReference type="GO" id="GO:0031258">
    <property type="term" value="C:lamellipodium membrane"/>
    <property type="evidence" value="ECO:0000250"/>
    <property type="project" value="UniProtKB"/>
</dbReference>
<dbReference type="GO" id="GO:0035692">
    <property type="term" value="C:macrophage migration inhibitory factor receptor complex"/>
    <property type="evidence" value="ECO:0007669"/>
    <property type="project" value="TreeGrafter"/>
</dbReference>
<dbReference type="GO" id="GO:0005902">
    <property type="term" value="C:microvillus"/>
    <property type="evidence" value="ECO:0000250"/>
    <property type="project" value="UniProtKB"/>
</dbReference>
<dbReference type="GO" id="GO:0005886">
    <property type="term" value="C:plasma membrane"/>
    <property type="evidence" value="ECO:0000250"/>
    <property type="project" value="UniProtKB"/>
</dbReference>
<dbReference type="GO" id="GO:0004896">
    <property type="term" value="F:cytokine receptor activity"/>
    <property type="evidence" value="ECO:0007669"/>
    <property type="project" value="TreeGrafter"/>
</dbReference>
<dbReference type="GO" id="GO:0005540">
    <property type="term" value="F:hyaluronic acid binding"/>
    <property type="evidence" value="ECO:0007669"/>
    <property type="project" value="InterPro"/>
</dbReference>
<dbReference type="GO" id="GO:0007155">
    <property type="term" value="P:cell adhesion"/>
    <property type="evidence" value="ECO:0007669"/>
    <property type="project" value="UniProtKB-KW"/>
</dbReference>
<dbReference type="GO" id="GO:0006954">
    <property type="term" value="P:inflammatory response"/>
    <property type="evidence" value="ECO:0007669"/>
    <property type="project" value="TreeGrafter"/>
</dbReference>
<dbReference type="GO" id="GO:0070374">
    <property type="term" value="P:positive regulation of ERK1 and ERK2 cascade"/>
    <property type="evidence" value="ECO:0007669"/>
    <property type="project" value="TreeGrafter"/>
</dbReference>
<dbReference type="GO" id="GO:2000392">
    <property type="term" value="P:regulation of lamellipodium morphogenesis"/>
    <property type="evidence" value="ECO:0000250"/>
    <property type="project" value="UniProtKB"/>
</dbReference>
<dbReference type="GO" id="GO:0044319">
    <property type="term" value="P:wound healing, spreading of cells"/>
    <property type="evidence" value="ECO:0000250"/>
    <property type="project" value="UniProtKB"/>
</dbReference>
<dbReference type="CDD" id="cd03516">
    <property type="entry name" value="Link_domain_CD44_like"/>
    <property type="match status" value="1"/>
</dbReference>
<dbReference type="FunFam" id="3.10.100.10:FF:000004">
    <property type="entry name" value="CD44 antigen isoform X2"/>
    <property type="match status" value="1"/>
</dbReference>
<dbReference type="Gene3D" id="3.10.100.10">
    <property type="entry name" value="Mannose-Binding Protein A, subunit A"/>
    <property type="match status" value="1"/>
</dbReference>
<dbReference type="InterPro" id="IPR016186">
    <property type="entry name" value="C-type_lectin-like/link_sf"/>
</dbReference>
<dbReference type="InterPro" id="IPR001231">
    <property type="entry name" value="CD44_antigen"/>
</dbReference>
<dbReference type="InterPro" id="IPR043210">
    <property type="entry name" value="CD44_antigen-like"/>
</dbReference>
<dbReference type="InterPro" id="IPR016187">
    <property type="entry name" value="CTDL_fold"/>
</dbReference>
<dbReference type="InterPro" id="IPR000538">
    <property type="entry name" value="Link_dom"/>
</dbReference>
<dbReference type="PANTHER" id="PTHR10225:SF6">
    <property type="entry name" value="CD44 ANTIGEN"/>
    <property type="match status" value="1"/>
</dbReference>
<dbReference type="PANTHER" id="PTHR10225">
    <property type="entry name" value="HYALURONAN RECEPTOR"/>
    <property type="match status" value="1"/>
</dbReference>
<dbReference type="Pfam" id="PF00193">
    <property type="entry name" value="Xlink"/>
    <property type="match status" value="1"/>
</dbReference>
<dbReference type="PRINTS" id="PR00658">
    <property type="entry name" value="CD44"/>
</dbReference>
<dbReference type="PRINTS" id="PR01265">
    <property type="entry name" value="LINKMODULE"/>
</dbReference>
<dbReference type="SMART" id="SM00445">
    <property type="entry name" value="LINK"/>
    <property type="match status" value="1"/>
</dbReference>
<dbReference type="SUPFAM" id="SSF56436">
    <property type="entry name" value="C-type lectin-like"/>
    <property type="match status" value="1"/>
</dbReference>
<dbReference type="PROSITE" id="PS01241">
    <property type="entry name" value="LINK_1"/>
    <property type="match status" value="1"/>
</dbReference>
<dbReference type="PROSITE" id="PS50963">
    <property type="entry name" value="LINK_2"/>
    <property type="match status" value="1"/>
</dbReference>
<feature type="signal peptide" evidence="1">
    <location>
        <begin position="1"/>
        <end position="22"/>
    </location>
</feature>
<feature type="chain" id="PRO_0000026688" description="CD44 antigen">
    <location>
        <begin position="23"/>
        <end position="431"/>
    </location>
</feature>
<feature type="topological domain" description="Extracellular" evidence="4">
    <location>
        <begin position="23"/>
        <end position="338"/>
    </location>
</feature>
<feature type="transmembrane region" description="Helical" evidence="4">
    <location>
        <begin position="339"/>
        <end position="359"/>
    </location>
</feature>
<feature type="topological domain" description="Cytoplasmic" evidence="4">
    <location>
        <begin position="360"/>
        <end position="431"/>
    </location>
</feature>
<feature type="domain" description="Link" evidence="5">
    <location>
        <begin position="34"/>
        <end position="122"/>
    </location>
</feature>
<feature type="region of interest" description="Disordered" evidence="6">
    <location>
        <begin position="158"/>
        <end position="191"/>
    </location>
</feature>
<feature type="region of interest" description="Disordered" evidence="6">
    <location>
        <begin position="219"/>
        <end position="243"/>
    </location>
</feature>
<feature type="region of interest" description="Stem">
    <location>
        <begin position="226"/>
        <end position="338"/>
    </location>
</feature>
<feature type="region of interest" description="Disordered" evidence="6">
    <location>
        <begin position="279"/>
        <end position="333"/>
    </location>
</feature>
<feature type="region of interest" description="Required for interaction with EZR, MSN and RDX and for co-localization to microvilli" evidence="2">
    <location>
        <begin position="362"/>
        <end position="380"/>
    </location>
</feature>
<feature type="region of interest" description="Disordered" evidence="6">
    <location>
        <begin position="376"/>
        <end position="396"/>
    </location>
</feature>
<feature type="compositionally biased region" description="Basic and acidic residues" evidence="6">
    <location>
        <begin position="158"/>
        <end position="169"/>
    </location>
</feature>
<feature type="compositionally biased region" description="Low complexity" evidence="6">
    <location>
        <begin position="181"/>
        <end position="191"/>
    </location>
</feature>
<feature type="compositionally biased region" description="Polar residues" evidence="6">
    <location>
        <begin position="302"/>
        <end position="329"/>
    </location>
</feature>
<feature type="binding site" evidence="1">
    <location>
        <position position="43"/>
    </location>
    <ligand>
        <name>hyaluronan</name>
        <dbReference type="ChEBI" id="CHEBI:132153"/>
    </ligand>
</feature>
<feature type="binding site" evidence="1">
    <location>
        <position position="80"/>
    </location>
    <ligand>
        <name>hyaluronan</name>
        <dbReference type="ChEBI" id="CHEBI:132153"/>
    </ligand>
</feature>
<feature type="binding site" evidence="1">
    <location>
        <position position="81"/>
    </location>
    <ligand>
        <name>hyaluronan</name>
        <dbReference type="ChEBI" id="CHEBI:132153"/>
    </ligand>
</feature>
<feature type="binding site" evidence="1">
    <location>
        <position position="107"/>
    </location>
    <ligand>
        <name>hyaluronan</name>
        <dbReference type="ChEBI" id="CHEBI:132153"/>
    </ligand>
</feature>
<feature type="modified residue" description="Phosphoserine; by PKC" evidence="3">
    <location>
        <position position="361"/>
    </location>
</feature>
<feature type="modified residue" description="Phosphoserine" evidence="3">
    <location>
        <position position="375"/>
    </location>
</feature>
<feature type="modified residue" description="Phosphoserine" evidence="2">
    <location>
        <position position="386"/>
    </location>
</feature>
<feature type="modified residue" description="Phosphoserine" evidence="3">
    <location>
        <position position="395"/>
    </location>
</feature>
<feature type="glycosylation site" description="N-linked (GlcNAc...) asparagine" evidence="4">
    <location>
        <position position="27"/>
    </location>
</feature>
<feature type="glycosylation site" description="N-linked (GlcNAc...) asparagine" evidence="4">
    <location>
        <position position="59"/>
    </location>
</feature>
<feature type="glycosylation site" description="N-linked (GlcNAc...) asparagine" evidence="4">
    <location>
        <position position="102"/>
    </location>
</feature>
<feature type="glycosylation site" description="N-linked (GlcNAc...) asparagine" evidence="4">
    <location>
        <position position="112"/>
    </location>
</feature>
<feature type="glycosylation site" description="N-linked (GlcNAc...) asparagine" evidence="4">
    <location>
        <position position="122"/>
    </location>
</feature>
<feature type="glycosylation site" description="N-linked (GlcNAc...) asparagine" evidence="4">
    <location>
        <position position="174"/>
    </location>
</feature>
<feature type="glycosylation site" description="O-linked (Xyl...) (chondroitin sulfate) serine" evidence="3">
    <location>
        <position position="182"/>
    </location>
</feature>
<feature type="glycosylation site" description="N-linked (GlcNAc...) asparagine" evidence="4">
    <location>
        <position position="256"/>
    </location>
</feature>
<feature type="glycosylation site" description="N-linked (GlcNAc...) asparagine" evidence="4">
    <location>
        <position position="325"/>
    </location>
</feature>
<feature type="disulfide bond" evidence="5">
    <location>
        <begin position="30"/>
        <end position="131"/>
    </location>
</feature>
<feature type="disulfide bond" evidence="5">
    <location>
        <begin position="55"/>
        <end position="120"/>
    </location>
</feature>
<feature type="disulfide bond" evidence="5">
    <location>
        <begin position="79"/>
        <end position="99"/>
    </location>
</feature>
<feature type="splice variant" id="VSP_005322" description="In isoform 2." evidence="7">
    <original>TRSGGKDGRRGGGLPKDATTSLEGYTTHYPETMENGTLTPVTPAKTGVFGETEVTVAEDSNFNVDGSLPG</original>
    <variation>R</variation>
    <location>
        <begin position="222"/>
        <end position="291"/>
    </location>
</feature>
<organism>
    <name type="scientific">Mesocricetus auratus</name>
    <name type="common">Golden hamster</name>
    <dbReference type="NCBI Taxonomy" id="10036"/>
    <lineage>
        <taxon>Eukaryota</taxon>
        <taxon>Metazoa</taxon>
        <taxon>Chordata</taxon>
        <taxon>Craniata</taxon>
        <taxon>Vertebrata</taxon>
        <taxon>Euteleostomi</taxon>
        <taxon>Mammalia</taxon>
        <taxon>Eutheria</taxon>
        <taxon>Euarchontoglires</taxon>
        <taxon>Glires</taxon>
        <taxon>Rodentia</taxon>
        <taxon>Myomorpha</taxon>
        <taxon>Muroidea</taxon>
        <taxon>Cricetidae</taxon>
        <taxon>Cricetinae</taxon>
        <taxon>Mesocricetus</taxon>
    </lineage>
</organism>
<name>CD44_MESAU</name>
<comment type="function">
    <text evidence="2 3">Cell-surface receptor that plays a role in cell-cell interactions, cell adhesion and migration, helping them to sense and respond to changes in the tissue microenvironment. Participates thereby in a wide variety of cellular functions including the activation, recirculation and homing of T-lymphocytes, hematopoiesis, inflammation and response to bacterial infection. Engages, through its ectodomain, extracellular matrix components such as hyaluronan/HA, collagen, growth factors, cytokines or proteases and serves as a platform for signal transduction by assembling, via its cytoplasmic domain, protein complexes containing receptor kinases and membrane proteases. Such effectors include PKN2, the RhoGTPases RAC1 and RHOA, Rho-kinases and phospholipase C that coordinate signaling pathways promoting calcium mobilization and actin-mediated cytoskeleton reorganization essential for cell migration and adhesion.</text>
</comment>
<comment type="subunit">
    <text evidence="2 3">Interacts with PKN2 (By similarity). Interacts with TIAM1 and TIAM2 (By similarity). Interacts with HA, as well as other glycosaminoglycans, collagen, laminin, and fibronectin via its N-terminal segment. Interacts with UNC119. Interacts with PDPN (via extracellular domain); this interaction is required for PDPN-mediated directional migration and regulation of lamellipodia extension/stabilization during cell spreading and migration (By similarity). Interacts with RDX, EZR and MSN (By similarity). Interacts with EGFR (By similarity). Interacts with CD74; this complex is essential for the MIF-induced signaling cascade that results in B cell survival (By similarity).</text>
</comment>
<comment type="subcellular location">
    <subcellularLocation>
        <location evidence="2">Cell membrane</location>
        <topology evidence="2">Single-pass type I membrane protein</topology>
    </subcellularLocation>
    <subcellularLocation>
        <location evidence="2">Cell projection</location>
        <location evidence="2">Microvillus</location>
    </subcellularLocation>
    <subcellularLocation>
        <location evidence="3">Secreted</location>
    </subcellularLocation>
    <text evidence="2">Colocalizes with actin in membrane protrusions at wounding edges. Co-localizes with RDX, EZR and MSN in microvilli.</text>
</comment>
<comment type="alternative products">
    <event type="alternative splicing"/>
    <isoform>
        <id>Q60522-1</id>
        <name>1</name>
        <sequence type="displayed"/>
    </isoform>
    <isoform>
        <id>Q60522-2</id>
        <name>2</name>
        <sequence type="described" ref="VSP_005322"/>
    </isoform>
    <text>Additional isoforms seem to exist.</text>
</comment>
<comment type="domain">
    <text evidence="1">The lectin-like LINK domain is responsible for hyaluronan binding.</text>
</comment>
<comment type="PTM">
    <text evidence="3">N-glycosylated.</text>
</comment>
<comment type="PTM">
    <text evidence="3">O-glycosylated; contains chondroitin sulfate glycans which can be more or less sulfated.</text>
</comment>
<comment type="PTM">
    <text evidence="1">Phosphorylated; activation of PKC results in the dephosphorylation of Ser-395 (constitutive phosphorylation site), and the phosphorylation of Ser-361.</text>
</comment>
<sequence>MDKFWWHAAWGLCLLPLSLAQQQIDLNITCRYAGVFHVEKNGRYSISRTEAADLCQAFNSTLPTMDQMVMALSKGFETCRYGFIEGHVVIPRIQPNAICAANHTGVYILTSNTSHYDTYCFNASAPLEEDCTSVTDLPNSFEGPVTITIVNRDGTRYSKKGEYRTHQEDIDASNTTDDDVSSGSSSEKSTSGGYVFHTYLPTIHSTADQDDPYFIGSTMATTRSGGKDGRRGGGLPKDATTSLEGYTTHYPETMENGTLTPVTPAKTGVFGETEVTVAEDSNFNVDGSLPGDQDSSMDPRGNSLTVTDGSKLTGHSSGNQDSGANTTSRPGRKPQIPEWLIVLASLLALALILAVCIAVNSRRRCGQKKKLVINSGNGKVEDRKPSELNGEASKSQEMVHLVNKEPSETPDQFMTADETRNLQNVDMKIGV</sequence>
<protein>
    <recommendedName>
        <fullName>CD44 antigen</fullName>
    </recommendedName>
    <alternativeName>
        <fullName>Extracellular matrix receptor III</fullName>
        <shortName>ECMR-III</shortName>
    </alternativeName>
    <alternativeName>
        <fullName>GP90 lymphocyte homing/adhesion receptor</fullName>
    </alternativeName>
    <alternativeName>
        <fullName>HAM1 antigen</fullName>
    </alternativeName>
    <alternativeName>
        <fullName>HUTCH-I</fullName>
    </alternativeName>
    <alternativeName>
        <fullName>Heparan sulfate proteoglycan</fullName>
    </alternativeName>
    <alternativeName>
        <fullName>Hermes antigen</fullName>
    </alternativeName>
    <alternativeName>
        <fullName>Hyaluronate receptor</fullName>
    </alternativeName>
    <alternativeName>
        <fullName>Phagocytic glycoprotein 1</fullName>
        <shortName>PGP-1</shortName>
    </alternativeName>
    <alternativeName>
        <fullName>Phagocytic glycoprotein I</fullName>
        <shortName>PGP-I</shortName>
    </alternativeName>
    <cdAntigenName>CD44</cdAntigenName>
</protein>
<gene>
    <name type="primary">CD44</name>
</gene>
<accession>Q60522</accession>
<accession>Q60523</accession>
<evidence type="ECO:0000250" key="1"/>
<evidence type="ECO:0000250" key="2">
    <source>
        <dbReference type="UniProtKB" id="P15379"/>
    </source>
</evidence>
<evidence type="ECO:0000250" key="3">
    <source>
        <dbReference type="UniProtKB" id="P16070"/>
    </source>
</evidence>
<evidence type="ECO:0000255" key="4"/>
<evidence type="ECO:0000255" key="5">
    <source>
        <dbReference type="PROSITE-ProRule" id="PRU00323"/>
    </source>
</evidence>
<evidence type="ECO:0000256" key="6">
    <source>
        <dbReference type="SAM" id="MobiDB-lite"/>
    </source>
</evidence>
<evidence type="ECO:0000303" key="7">
    <source ref="1"/>
</evidence>
<reference key="1">
    <citation type="submission" date="1995-06" db="EMBL/GenBank/DDBJ databases">
        <authorList>
            <person name="Paulauskis J.D."/>
            <person name="Kobzik L."/>
            <person name="Gerard C."/>
            <person name="Katler M."/>
            <person name="Godleski J.J."/>
        </authorList>
    </citation>
    <scope>NUCLEOTIDE SEQUENCE [MRNA] (ISOFORMS 1 AND 2)</scope>
    <source>
        <strain>LVG</strain>
        <tissue>Alveolar macrophage</tissue>
    </source>
</reference>